<name>TAM_PSEAB</name>
<sequence>MVHDLLRDRADLEARWNPSAYMQFARLRQRPVVELLDNIELCCPERIYDLGCGTGIATELLARRWPLAELHGVDSSVEMLEEAARLPIKASWERANLRHWCAERPASLLFAAAVLHFLEDHGKLLPRLLGQLAPGGCLAAHMPNWRDASWYRLMLDALDSAGPGGASLGSPALRYRLHRRNVLSLDNYYRLLAPLTAELDIWETEYLQVVDGNDPIFDWIKVSALRPVLGELDEEARRRFLDRYLELLHRHYPRELDGRTLFPFRRVFIVASLGR</sequence>
<dbReference type="EC" id="2.1.1.144" evidence="1"/>
<dbReference type="EMBL" id="CP000438">
    <property type="protein sequence ID" value="ABJ11746.1"/>
    <property type="molecule type" value="Genomic_DNA"/>
</dbReference>
<dbReference type="RefSeq" id="WP_003139041.1">
    <property type="nucleotide sequence ID" value="NZ_CP034244.1"/>
</dbReference>
<dbReference type="SMR" id="Q02N15"/>
<dbReference type="KEGG" id="pau:PA14_31370"/>
<dbReference type="PseudoCAP" id="PA14_31370"/>
<dbReference type="HOGENOM" id="CLU_037990_5_2_6"/>
<dbReference type="BioCyc" id="PAER208963:G1G74-2642-MONOMER"/>
<dbReference type="Proteomes" id="UP000000653">
    <property type="component" value="Chromosome"/>
</dbReference>
<dbReference type="GO" id="GO:0005737">
    <property type="term" value="C:cytoplasm"/>
    <property type="evidence" value="ECO:0007669"/>
    <property type="project" value="UniProtKB-SubCell"/>
</dbReference>
<dbReference type="GO" id="GO:0030798">
    <property type="term" value="F:trans-aconitate 2-methyltransferase activity"/>
    <property type="evidence" value="ECO:0007669"/>
    <property type="project" value="UniProtKB-UniRule"/>
</dbReference>
<dbReference type="GO" id="GO:0032259">
    <property type="term" value="P:methylation"/>
    <property type="evidence" value="ECO:0007669"/>
    <property type="project" value="UniProtKB-KW"/>
</dbReference>
<dbReference type="CDD" id="cd02440">
    <property type="entry name" value="AdoMet_MTases"/>
    <property type="match status" value="1"/>
</dbReference>
<dbReference type="Gene3D" id="1.10.150.290">
    <property type="entry name" value="S-adenosyl-L-methionine-dependent methyltransferases"/>
    <property type="match status" value="1"/>
</dbReference>
<dbReference type="Gene3D" id="3.40.50.150">
    <property type="entry name" value="Vaccinia Virus protein VP39"/>
    <property type="match status" value="1"/>
</dbReference>
<dbReference type="HAMAP" id="MF_00560">
    <property type="entry name" value="Tran_acon_Me_trans"/>
    <property type="match status" value="1"/>
</dbReference>
<dbReference type="InterPro" id="IPR041698">
    <property type="entry name" value="Methyltransf_25"/>
</dbReference>
<dbReference type="InterPro" id="IPR029063">
    <property type="entry name" value="SAM-dependent_MTases_sf"/>
</dbReference>
<dbReference type="InterPro" id="IPR023506">
    <property type="entry name" value="Trans-aconitate_MeTrfase"/>
</dbReference>
<dbReference type="InterPro" id="IPR023149">
    <property type="entry name" value="Trans_acon_MeTrfase_C"/>
</dbReference>
<dbReference type="PANTHER" id="PTHR43861:SF1">
    <property type="entry name" value="TRANS-ACONITATE 2-METHYLTRANSFERASE"/>
    <property type="match status" value="1"/>
</dbReference>
<dbReference type="PANTHER" id="PTHR43861">
    <property type="entry name" value="TRANS-ACONITATE 2-METHYLTRANSFERASE-RELATED"/>
    <property type="match status" value="1"/>
</dbReference>
<dbReference type="Pfam" id="PF13649">
    <property type="entry name" value="Methyltransf_25"/>
    <property type="match status" value="1"/>
</dbReference>
<dbReference type="SUPFAM" id="SSF53335">
    <property type="entry name" value="S-adenosyl-L-methionine-dependent methyltransferases"/>
    <property type="match status" value="1"/>
</dbReference>
<evidence type="ECO:0000255" key="1">
    <source>
        <dbReference type="HAMAP-Rule" id="MF_00560"/>
    </source>
</evidence>
<keyword id="KW-0963">Cytoplasm</keyword>
<keyword id="KW-0489">Methyltransferase</keyword>
<keyword id="KW-0949">S-adenosyl-L-methionine</keyword>
<keyword id="KW-0808">Transferase</keyword>
<reference key="1">
    <citation type="journal article" date="2006" name="Genome Biol.">
        <title>Genomic analysis reveals that Pseudomonas aeruginosa virulence is combinatorial.</title>
        <authorList>
            <person name="Lee D.G."/>
            <person name="Urbach J.M."/>
            <person name="Wu G."/>
            <person name="Liberati N.T."/>
            <person name="Feinbaum R.L."/>
            <person name="Miyata S."/>
            <person name="Diggins L.T."/>
            <person name="He J."/>
            <person name="Saucier M."/>
            <person name="Deziel E."/>
            <person name="Friedman L."/>
            <person name="Li L."/>
            <person name="Grills G."/>
            <person name="Montgomery K."/>
            <person name="Kucherlapati R."/>
            <person name="Rahme L.G."/>
            <person name="Ausubel F.M."/>
        </authorList>
    </citation>
    <scope>NUCLEOTIDE SEQUENCE [LARGE SCALE GENOMIC DNA]</scope>
    <source>
        <strain>UCBPP-PA14</strain>
    </source>
</reference>
<feature type="chain" id="PRO_1000056572" description="Trans-aconitate 2-methyltransferase">
    <location>
        <begin position="1"/>
        <end position="275"/>
    </location>
</feature>
<proteinExistence type="inferred from homology"/>
<gene>
    <name evidence="1" type="primary">tam</name>
    <name type="ordered locus">PA14_31370</name>
</gene>
<accession>Q02N15</accession>
<comment type="function">
    <text evidence="1">Catalyzes the S-adenosylmethionine monomethyl esterification of trans-aconitate.</text>
</comment>
<comment type="catalytic activity">
    <reaction evidence="1">
        <text>trans-aconitate + S-adenosyl-L-methionine = (E)-3-(methoxycarbonyl)pent-2-enedioate + S-adenosyl-L-homocysteine</text>
        <dbReference type="Rhea" id="RHEA:14969"/>
        <dbReference type="ChEBI" id="CHEBI:15708"/>
        <dbReference type="ChEBI" id="CHEBI:57470"/>
        <dbReference type="ChEBI" id="CHEBI:57856"/>
        <dbReference type="ChEBI" id="CHEBI:59789"/>
        <dbReference type="EC" id="2.1.1.144"/>
    </reaction>
</comment>
<comment type="subcellular location">
    <subcellularLocation>
        <location evidence="1">Cytoplasm</location>
    </subcellularLocation>
</comment>
<comment type="similarity">
    <text evidence="1">Belongs to the methyltransferase superfamily. Tam family.</text>
</comment>
<organism>
    <name type="scientific">Pseudomonas aeruginosa (strain UCBPP-PA14)</name>
    <dbReference type="NCBI Taxonomy" id="208963"/>
    <lineage>
        <taxon>Bacteria</taxon>
        <taxon>Pseudomonadati</taxon>
        <taxon>Pseudomonadota</taxon>
        <taxon>Gammaproteobacteria</taxon>
        <taxon>Pseudomonadales</taxon>
        <taxon>Pseudomonadaceae</taxon>
        <taxon>Pseudomonas</taxon>
    </lineage>
</organism>
<protein>
    <recommendedName>
        <fullName evidence="1">Trans-aconitate 2-methyltransferase</fullName>
        <ecNumber evidence="1">2.1.1.144</ecNumber>
    </recommendedName>
</protein>